<organism>
    <name type="scientific">Laccaria bicolor (strain S238N-H82 / ATCC MYA-4686)</name>
    <name type="common">Bicoloured deceiver</name>
    <name type="synonym">Laccaria laccata var. bicolor</name>
    <dbReference type="NCBI Taxonomy" id="486041"/>
    <lineage>
        <taxon>Eukaryota</taxon>
        <taxon>Fungi</taxon>
        <taxon>Dikarya</taxon>
        <taxon>Basidiomycota</taxon>
        <taxon>Agaricomycotina</taxon>
        <taxon>Agaricomycetes</taxon>
        <taxon>Agaricomycetidae</taxon>
        <taxon>Agaricales</taxon>
        <taxon>Agaricineae</taxon>
        <taxon>Hydnangiaceae</taxon>
        <taxon>Laccaria</taxon>
    </lineage>
</organism>
<name>DRE2_LACBS</name>
<feature type="chain" id="PRO_0000392390" description="Fe-S cluster assembly protein DRE2">
    <location>
        <begin position="1"/>
        <end position="316"/>
    </location>
</feature>
<feature type="region of interest" description="N-terminal SAM-like domain" evidence="1">
    <location>
        <begin position="4"/>
        <end position="156"/>
    </location>
</feature>
<feature type="region of interest" description="Linker" evidence="1">
    <location>
        <begin position="157"/>
        <end position="202"/>
    </location>
</feature>
<feature type="region of interest" description="Fe-S binding site A" evidence="1">
    <location>
        <begin position="209"/>
        <end position="228"/>
    </location>
</feature>
<feature type="region of interest" description="Fe-S binding site B" evidence="1">
    <location>
        <begin position="279"/>
        <end position="293"/>
    </location>
</feature>
<feature type="short sequence motif" description="Cx2C motif 1" evidence="1">
    <location>
        <begin position="279"/>
        <end position="282"/>
    </location>
</feature>
<feature type="short sequence motif" description="Cx2C motif 2" evidence="1">
    <location>
        <begin position="290"/>
        <end position="293"/>
    </location>
</feature>
<feature type="binding site" evidence="1">
    <location>
        <position position="209"/>
    </location>
    <ligand>
        <name>[2Fe-2S] cluster</name>
        <dbReference type="ChEBI" id="CHEBI:190135"/>
    </ligand>
</feature>
<feature type="binding site" evidence="1">
    <location>
        <position position="223"/>
    </location>
    <ligand>
        <name>[2Fe-2S] cluster</name>
        <dbReference type="ChEBI" id="CHEBI:190135"/>
    </ligand>
</feature>
<feature type="binding site" evidence="1">
    <location>
        <position position="226"/>
    </location>
    <ligand>
        <name>[2Fe-2S] cluster</name>
        <dbReference type="ChEBI" id="CHEBI:190135"/>
    </ligand>
</feature>
<feature type="binding site" evidence="1">
    <location>
        <position position="228"/>
    </location>
    <ligand>
        <name>[2Fe-2S] cluster</name>
        <dbReference type="ChEBI" id="CHEBI:190135"/>
    </ligand>
</feature>
<feature type="binding site" evidence="1">
    <location>
        <position position="279"/>
    </location>
    <ligand>
        <name>[4Fe-4S] cluster</name>
        <dbReference type="ChEBI" id="CHEBI:49883"/>
    </ligand>
</feature>
<feature type="binding site" evidence="1">
    <location>
        <position position="282"/>
    </location>
    <ligand>
        <name>[4Fe-4S] cluster</name>
        <dbReference type="ChEBI" id="CHEBI:49883"/>
    </ligand>
</feature>
<feature type="binding site" evidence="1">
    <location>
        <position position="290"/>
    </location>
    <ligand>
        <name>[4Fe-4S] cluster</name>
        <dbReference type="ChEBI" id="CHEBI:49883"/>
    </ligand>
</feature>
<feature type="binding site" evidence="1">
    <location>
        <position position="293"/>
    </location>
    <ligand>
        <name>[4Fe-4S] cluster</name>
        <dbReference type="ChEBI" id="CHEBI:49883"/>
    </ligand>
</feature>
<comment type="function">
    <text evidence="1">Component of the cytosolic iron-sulfur (Fe-S) protein assembly (CIA) machinery required for the maturation of extramitochondrial Fe-S proteins. Part of an electron transfer chain functioning in an early step of cytosolic Fe-S biogenesis, facilitating the de novo assembly of a [4Fe-4S] cluster on the scaffold complex CFD1-NBP35. Electrons are transferred to DRE2 from NADPH via the FAD- and FMN-containing protein TAH18. TAH18-DRE2 are also required for the assembly of the diferric tyrosyl radical cofactor of ribonucleotide reductase (RNR), probably by providing electrons for reduction during radical cofactor maturation in the catalytic small subunit RNR2.</text>
</comment>
<comment type="cofactor">
    <cofactor evidence="1">
        <name>[2Fe-2S] cluster</name>
        <dbReference type="ChEBI" id="CHEBI:190135"/>
    </cofactor>
</comment>
<comment type="cofactor">
    <cofactor evidence="1">
        <name>[4Fe-4S] cluster</name>
        <dbReference type="ChEBI" id="CHEBI:49883"/>
    </cofactor>
</comment>
<comment type="subunit">
    <text evidence="1">Monomer. Interacts with TAH18. Interacts with MIA40.</text>
</comment>
<comment type="subcellular location">
    <subcellularLocation>
        <location evidence="1">Cytoplasm</location>
    </subcellularLocation>
    <subcellularLocation>
        <location evidence="1">Mitochondrion intermembrane space</location>
    </subcellularLocation>
</comment>
<comment type="domain">
    <text evidence="1">The C-terminal domain binds 2 Fe-S clusters but is otherwise mostly in an intrinsically disordered conformation.</text>
</comment>
<comment type="domain">
    <text evidence="1">The N-terminal domain has structural similarity with S-adenosyl-L-methionine-dependent methyltransferases, but does not bind S-adenosyl-L-methionine. It is required for correct assembly of the 2 Fe-S clusters.</text>
</comment>
<comment type="domain">
    <text evidence="1">The twin Cx2C motifs are involved in the recognition by the mitochondrial MIA40-ERV1 disulfide relay system. The formation of 2 disulfide bonds in the Cx2C motifs through dithiol/disulfide exchange reactions effectively traps the protein in the mitochondrial intermembrane space.</text>
</comment>
<comment type="similarity">
    <text evidence="1">Belongs to the anamorsin family.</text>
</comment>
<protein>
    <recommendedName>
        <fullName evidence="1">Fe-S cluster assembly protein DRE2</fullName>
    </recommendedName>
    <alternativeName>
        <fullName evidence="1">Anamorsin homolog</fullName>
    </alternativeName>
</protein>
<gene>
    <name evidence="1" type="primary">DRE2</name>
    <name type="ORF">LACBIDRAFT_305744</name>
</gene>
<keyword id="KW-0001">2Fe-2S</keyword>
<keyword id="KW-0004">4Fe-4S</keyword>
<keyword id="KW-0963">Cytoplasm</keyword>
<keyword id="KW-0408">Iron</keyword>
<keyword id="KW-0411">Iron-sulfur</keyword>
<keyword id="KW-0479">Metal-binding</keyword>
<keyword id="KW-0496">Mitochondrion</keyword>
<keyword id="KW-1185">Reference proteome</keyword>
<sequence length="316" mass="33502">MSPSMPVATTVAADPIAVGAVAVKRPALVIGSLSTAEDGTYQALISDLQSSRQVDRQLLDRLVDNATTLEPSSYDSVHITLAPSDYQGLTQKLPQLLSQLLTGLTPLGTLHLINLTSAVRTLPSELTLAGFNVLSALPDEGTIIAQKPQHVASTSVPLKSRQPGALLNRKKTDPAKKQALWALSSPSTPKIDPEALLTAEDKTRLTPACEPVRSSAPRRKKACKSCSCGLAELEEEERKLGKVVLLDGSQDGTAKEVSQDEKERLIIAAKAAPKATSSCGSCFLGDAFRCAGCPYLGLPAFKPGEKVEIDFGMDDF</sequence>
<reference key="1">
    <citation type="journal article" date="2008" name="Nature">
        <title>The genome of Laccaria bicolor provides insights into mycorrhizal symbiosis.</title>
        <authorList>
            <person name="Martin F."/>
            <person name="Aerts A."/>
            <person name="Ahren D."/>
            <person name="Brun A."/>
            <person name="Danchin E.G.J."/>
            <person name="Duchaussoy F."/>
            <person name="Gibon J."/>
            <person name="Kohler A."/>
            <person name="Lindquist E."/>
            <person name="Pereda V."/>
            <person name="Salamov A."/>
            <person name="Shapiro H.J."/>
            <person name="Wuyts J."/>
            <person name="Blaudez D."/>
            <person name="Buee M."/>
            <person name="Brokstein P."/>
            <person name="Canbaeck B."/>
            <person name="Cohen D."/>
            <person name="Courty P.E."/>
            <person name="Coutinho P.M."/>
            <person name="Delaruelle C."/>
            <person name="Detter J.C."/>
            <person name="Deveau A."/>
            <person name="DiFazio S."/>
            <person name="Duplessis S."/>
            <person name="Fraissinet-Tachet L."/>
            <person name="Lucic E."/>
            <person name="Frey-Klett P."/>
            <person name="Fourrey C."/>
            <person name="Feussner I."/>
            <person name="Gay G."/>
            <person name="Grimwood J."/>
            <person name="Hoegger P.J."/>
            <person name="Jain P."/>
            <person name="Kilaru S."/>
            <person name="Labbe J."/>
            <person name="Lin Y.C."/>
            <person name="Legue V."/>
            <person name="Le Tacon F."/>
            <person name="Marmeisse R."/>
            <person name="Melayah D."/>
            <person name="Montanini B."/>
            <person name="Muratet M."/>
            <person name="Nehls U."/>
            <person name="Niculita-Hirzel H."/>
            <person name="Oudot-Le Secq M.P."/>
            <person name="Peter M."/>
            <person name="Quesneville H."/>
            <person name="Rajashekar B."/>
            <person name="Reich M."/>
            <person name="Rouhier N."/>
            <person name="Schmutz J."/>
            <person name="Yin T."/>
            <person name="Chalot M."/>
            <person name="Henrissat B."/>
            <person name="Kuees U."/>
            <person name="Lucas S."/>
            <person name="Van de Peer Y."/>
            <person name="Podila G.K."/>
            <person name="Polle A."/>
            <person name="Pukkila P.J."/>
            <person name="Richardson P.M."/>
            <person name="Rouze P."/>
            <person name="Sanders I.R."/>
            <person name="Stajich J.E."/>
            <person name="Tunlid A."/>
            <person name="Tuskan G."/>
            <person name="Grigoriev I.V."/>
        </authorList>
    </citation>
    <scope>NUCLEOTIDE SEQUENCE [LARGE SCALE GENOMIC DNA]</scope>
    <source>
        <strain>S238N-H82 / ATCC MYA-4686</strain>
    </source>
</reference>
<dbReference type="EMBL" id="DS547092">
    <property type="protein sequence ID" value="EDR14182.1"/>
    <property type="molecule type" value="Genomic_DNA"/>
</dbReference>
<dbReference type="RefSeq" id="XP_001874741.1">
    <property type="nucleotide sequence ID" value="XM_001874706.1"/>
</dbReference>
<dbReference type="FunCoup" id="B0CRU6">
    <property type="interactions" value="329"/>
</dbReference>
<dbReference type="STRING" id="486041.B0CRU6"/>
<dbReference type="GeneID" id="6070365"/>
<dbReference type="KEGG" id="lbc:LACBIDRAFT_305744"/>
<dbReference type="HOGENOM" id="CLU_054098_0_0_1"/>
<dbReference type="InParanoid" id="B0CRU6"/>
<dbReference type="OrthoDB" id="311633at2759"/>
<dbReference type="Proteomes" id="UP000001194">
    <property type="component" value="Unassembled WGS sequence"/>
</dbReference>
<dbReference type="GO" id="GO:0005758">
    <property type="term" value="C:mitochondrial intermembrane space"/>
    <property type="evidence" value="ECO:0007669"/>
    <property type="project" value="UniProtKB-SubCell"/>
</dbReference>
<dbReference type="GO" id="GO:0051537">
    <property type="term" value="F:2 iron, 2 sulfur cluster binding"/>
    <property type="evidence" value="ECO:0007669"/>
    <property type="project" value="UniProtKB-UniRule"/>
</dbReference>
<dbReference type="GO" id="GO:0051539">
    <property type="term" value="F:4 iron, 4 sulfur cluster binding"/>
    <property type="evidence" value="ECO:0007669"/>
    <property type="project" value="UniProtKB-KW"/>
</dbReference>
<dbReference type="GO" id="GO:0009055">
    <property type="term" value="F:electron transfer activity"/>
    <property type="evidence" value="ECO:0007669"/>
    <property type="project" value="UniProtKB-UniRule"/>
</dbReference>
<dbReference type="GO" id="GO:0046872">
    <property type="term" value="F:metal ion binding"/>
    <property type="evidence" value="ECO:0007669"/>
    <property type="project" value="UniProtKB-KW"/>
</dbReference>
<dbReference type="GO" id="GO:0016226">
    <property type="term" value="P:iron-sulfur cluster assembly"/>
    <property type="evidence" value="ECO:0007669"/>
    <property type="project" value="UniProtKB-UniRule"/>
</dbReference>
<dbReference type="HAMAP" id="MF_03115">
    <property type="entry name" value="Anamorsin"/>
    <property type="match status" value="1"/>
</dbReference>
<dbReference type="InterPro" id="IPR007785">
    <property type="entry name" value="Anamorsin"/>
</dbReference>
<dbReference type="InterPro" id="IPR046408">
    <property type="entry name" value="CIAPIN1"/>
</dbReference>
<dbReference type="InterPro" id="IPR031838">
    <property type="entry name" value="Dre2_N"/>
</dbReference>
<dbReference type="PANTHER" id="PTHR13273">
    <property type="entry name" value="ANAMORSIN"/>
    <property type="match status" value="1"/>
</dbReference>
<dbReference type="PANTHER" id="PTHR13273:SF14">
    <property type="entry name" value="ANAMORSIN"/>
    <property type="match status" value="1"/>
</dbReference>
<dbReference type="Pfam" id="PF05093">
    <property type="entry name" value="CIAPIN1"/>
    <property type="match status" value="1"/>
</dbReference>
<dbReference type="Pfam" id="PF16803">
    <property type="entry name" value="DRE2_N"/>
    <property type="match status" value="1"/>
</dbReference>
<accession>B0CRU6</accession>
<evidence type="ECO:0000255" key="1">
    <source>
        <dbReference type="HAMAP-Rule" id="MF_03115"/>
    </source>
</evidence>
<proteinExistence type="inferred from homology"/>